<dbReference type="EC" id="5.4.99.25" evidence="1"/>
<dbReference type="EMBL" id="CP000489">
    <property type="protein sequence ID" value="ABL70885.1"/>
    <property type="molecule type" value="Genomic_DNA"/>
</dbReference>
<dbReference type="RefSeq" id="WP_011749076.1">
    <property type="nucleotide sequence ID" value="NC_008686.1"/>
</dbReference>
<dbReference type="SMR" id="A1B5U1"/>
<dbReference type="STRING" id="318586.Pden_2801"/>
<dbReference type="EnsemblBacteria" id="ABL70885">
    <property type="protein sequence ID" value="ABL70885"/>
    <property type="gene ID" value="Pden_2801"/>
</dbReference>
<dbReference type="GeneID" id="93451199"/>
<dbReference type="KEGG" id="pde:Pden_2801"/>
<dbReference type="eggNOG" id="COG0130">
    <property type="taxonomic scope" value="Bacteria"/>
</dbReference>
<dbReference type="HOGENOM" id="CLU_032087_0_3_5"/>
<dbReference type="OrthoDB" id="9802309at2"/>
<dbReference type="Proteomes" id="UP000000361">
    <property type="component" value="Chromosome 1"/>
</dbReference>
<dbReference type="GO" id="GO:0003723">
    <property type="term" value="F:RNA binding"/>
    <property type="evidence" value="ECO:0007669"/>
    <property type="project" value="InterPro"/>
</dbReference>
<dbReference type="GO" id="GO:0160148">
    <property type="term" value="F:tRNA pseudouridine(55) synthase activity"/>
    <property type="evidence" value="ECO:0007669"/>
    <property type="project" value="UniProtKB-EC"/>
</dbReference>
<dbReference type="GO" id="GO:1990481">
    <property type="term" value="P:mRNA pseudouridine synthesis"/>
    <property type="evidence" value="ECO:0007669"/>
    <property type="project" value="TreeGrafter"/>
</dbReference>
<dbReference type="GO" id="GO:0031119">
    <property type="term" value="P:tRNA pseudouridine synthesis"/>
    <property type="evidence" value="ECO:0007669"/>
    <property type="project" value="UniProtKB-UniRule"/>
</dbReference>
<dbReference type="CDD" id="cd02573">
    <property type="entry name" value="PseudoU_synth_EcTruB"/>
    <property type="match status" value="1"/>
</dbReference>
<dbReference type="Gene3D" id="3.30.2350.10">
    <property type="entry name" value="Pseudouridine synthase"/>
    <property type="match status" value="1"/>
</dbReference>
<dbReference type="HAMAP" id="MF_01080">
    <property type="entry name" value="TruB_bact"/>
    <property type="match status" value="1"/>
</dbReference>
<dbReference type="InterPro" id="IPR020103">
    <property type="entry name" value="PsdUridine_synth_cat_dom_sf"/>
</dbReference>
<dbReference type="InterPro" id="IPR002501">
    <property type="entry name" value="PsdUridine_synth_N"/>
</dbReference>
<dbReference type="InterPro" id="IPR014780">
    <property type="entry name" value="tRNA_psdUridine_synth_TruB"/>
</dbReference>
<dbReference type="InterPro" id="IPR032819">
    <property type="entry name" value="TruB_C"/>
</dbReference>
<dbReference type="NCBIfam" id="TIGR00431">
    <property type="entry name" value="TruB"/>
    <property type="match status" value="1"/>
</dbReference>
<dbReference type="PANTHER" id="PTHR13767:SF2">
    <property type="entry name" value="PSEUDOURIDYLATE SYNTHASE TRUB1"/>
    <property type="match status" value="1"/>
</dbReference>
<dbReference type="PANTHER" id="PTHR13767">
    <property type="entry name" value="TRNA-PSEUDOURIDINE SYNTHASE"/>
    <property type="match status" value="1"/>
</dbReference>
<dbReference type="Pfam" id="PF16198">
    <property type="entry name" value="TruB_C_2"/>
    <property type="match status" value="1"/>
</dbReference>
<dbReference type="Pfam" id="PF01509">
    <property type="entry name" value="TruB_N"/>
    <property type="match status" value="1"/>
</dbReference>
<dbReference type="SUPFAM" id="SSF55120">
    <property type="entry name" value="Pseudouridine synthase"/>
    <property type="match status" value="1"/>
</dbReference>
<comment type="function">
    <text evidence="1">Responsible for synthesis of pseudouridine from uracil-55 in the psi GC loop of transfer RNAs.</text>
</comment>
<comment type="catalytic activity">
    <reaction evidence="1">
        <text>uridine(55) in tRNA = pseudouridine(55) in tRNA</text>
        <dbReference type="Rhea" id="RHEA:42532"/>
        <dbReference type="Rhea" id="RHEA-COMP:10101"/>
        <dbReference type="Rhea" id="RHEA-COMP:10102"/>
        <dbReference type="ChEBI" id="CHEBI:65314"/>
        <dbReference type="ChEBI" id="CHEBI:65315"/>
        <dbReference type="EC" id="5.4.99.25"/>
    </reaction>
</comment>
<comment type="similarity">
    <text evidence="1">Belongs to the pseudouridine synthase TruB family. Type 1 subfamily.</text>
</comment>
<feature type="chain" id="PRO_1000084634" description="tRNA pseudouridine synthase B">
    <location>
        <begin position="1"/>
        <end position="298"/>
    </location>
</feature>
<feature type="active site" description="Nucleophile" evidence="1">
    <location>
        <position position="46"/>
    </location>
</feature>
<sequence length="298" mass="31564">MARKKGREIHGWLIVDKPAGIGSTDVVGKVRWALDAKKAGHAGTLDPDATGVLAVALGEATKTVPILTDALKAYDFTVSWGAETSTDDASGGVVKTSDARPDEAAIRAALPEFTGEIMQVPPAVSAVRVDGARAYDLAREGEVVELAARPLWVESLELLGAARDSAELRMVCGKGGYVRSIARDLGRKLGCLGHVAQLRRIWSGPFEAGDGFAFDRIDRANQAEIEAALLPLQAALADLPEMQATEIGATRILNGNPGQVLGHAEFGEEVWVSRNGRALCIGRYMGGEVQPSRVFNLG</sequence>
<name>TRUB_PARDP</name>
<proteinExistence type="inferred from homology"/>
<accession>A1B5U1</accession>
<protein>
    <recommendedName>
        <fullName evidence="1">tRNA pseudouridine synthase B</fullName>
        <ecNumber evidence="1">5.4.99.25</ecNumber>
    </recommendedName>
    <alternativeName>
        <fullName evidence="1">tRNA pseudouridine(55) synthase</fullName>
        <shortName evidence="1">Psi55 synthase</shortName>
    </alternativeName>
    <alternativeName>
        <fullName evidence="1">tRNA pseudouridylate synthase</fullName>
    </alternativeName>
    <alternativeName>
        <fullName evidence="1">tRNA-uridine isomerase</fullName>
    </alternativeName>
</protein>
<organism>
    <name type="scientific">Paracoccus denitrificans (strain Pd 1222)</name>
    <dbReference type="NCBI Taxonomy" id="318586"/>
    <lineage>
        <taxon>Bacteria</taxon>
        <taxon>Pseudomonadati</taxon>
        <taxon>Pseudomonadota</taxon>
        <taxon>Alphaproteobacteria</taxon>
        <taxon>Rhodobacterales</taxon>
        <taxon>Paracoccaceae</taxon>
        <taxon>Paracoccus</taxon>
    </lineage>
</organism>
<gene>
    <name evidence="1" type="primary">truB</name>
    <name type="ordered locus">Pden_2801</name>
</gene>
<evidence type="ECO:0000255" key="1">
    <source>
        <dbReference type="HAMAP-Rule" id="MF_01080"/>
    </source>
</evidence>
<keyword id="KW-0413">Isomerase</keyword>
<keyword id="KW-1185">Reference proteome</keyword>
<keyword id="KW-0819">tRNA processing</keyword>
<reference key="1">
    <citation type="submission" date="2006-12" db="EMBL/GenBank/DDBJ databases">
        <title>Complete sequence of chromosome 1 of Paracoccus denitrificans PD1222.</title>
        <authorList>
            <person name="Copeland A."/>
            <person name="Lucas S."/>
            <person name="Lapidus A."/>
            <person name="Barry K."/>
            <person name="Detter J.C."/>
            <person name="Glavina del Rio T."/>
            <person name="Hammon N."/>
            <person name="Israni S."/>
            <person name="Dalin E."/>
            <person name="Tice H."/>
            <person name="Pitluck S."/>
            <person name="Munk A.C."/>
            <person name="Brettin T."/>
            <person name="Bruce D."/>
            <person name="Han C."/>
            <person name="Tapia R."/>
            <person name="Gilna P."/>
            <person name="Schmutz J."/>
            <person name="Larimer F."/>
            <person name="Land M."/>
            <person name="Hauser L."/>
            <person name="Kyrpides N."/>
            <person name="Lykidis A."/>
            <person name="Spiro S."/>
            <person name="Richardson D.J."/>
            <person name="Moir J.W.B."/>
            <person name="Ferguson S.J."/>
            <person name="van Spanning R.J.M."/>
            <person name="Richardson P."/>
        </authorList>
    </citation>
    <scope>NUCLEOTIDE SEQUENCE [LARGE SCALE GENOMIC DNA]</scope>
    <source>
        <strain>Pd 1222</strain>
    </source>
</reference>